<accession>Q9CLF4</accession>
<protein>
    <recommendedName>
        <fullName>Uncharacterized transporter PM1281</fullName>
    </recommendedName>
</protein>
<gene>
    <name type="ordered locus">PM1281</name>
</gene>
<keyword id="KW-1003">Cell membrane</keyword>
<keyword id="KW-0472">Membrane</keyword>
<keyword id="KW-1185">Reference proteome</keyword>
<keyword id="KW-0812">Transmembrane</keyword>
<keyword id="KW-1133">Transmembrane helix</keyword>
<keyword id="KW-0813">Transport</keyword>
<name>Y1281_PASMU</name>
<reference key="1">
    <citation type="journal article" date="2001" name="Proc. Natl. Acad. Sci. U.S.A.">
        <title>Complete genomic sequence of Pasteurella multocida Pm70.</title>
        <authorList>
            <person name="May B.J."/>
            <person name="Zhang Q."/>
            <person name="Li L.L."/>
            <person name="Paustian M.L."/>
            <person name="Whittam T.S."/>
            <person name="Kapur V."/>
        </authorList>
    </citation>
    <scope>NUCLEOTIDE SEQUENCE [LARGE SCALE GENOMIC DNA]</scope>
    <source>
        <strain>Pm70</strain>
    </source>
</reference>
<evidence type="ECO:0000255" key="1"/>
<evidence type="ECO:0000305" key="2"/>
<dbReference type="EMBL" id="AE004439">
    <property type="protein sequence ID" value="AAK03365.1"/>
    <property type="molecule type" value="Genomic_DNA"/>
</dbReference>
<dbReference type="SMR" id="Q9CLF4"/>
<dbReference type="EnsemblBacteria" id="AAK03365">
    <property type="protein sequence ID" value="AAK03365"/>
    <property type="gene ID" value="PM1281"/>
</dbReference>
<dbReference type="KEGG" id="pmu:PM1281"/>
<dbReference type="PATRIC" id="fig|272843.6.peg.1292"/>
<dbReference type="HOGENOM" id="CLU_054508_2_0_6"/>
<dbReference type="OrthoDB" id="3250831at2"/>
<dbReference type="Proteomes" id="UP000000809">
    <property type="component" value="Chromosome"/>
</dbReference>
<dbReference type="GO" id="GO:0005886">
    <property type="term" value="C:plasma membrane"/>
    <property type="evidence" value="ECO:0007669"/>
    <property type="project" value="UniProtKB-SubCell"/>
</dbReference>
<dbReference type="InterPro" id="IPR000620">
    <property type="entry name" value="EamA_dom"/>
</dbReference>
<dbReference type="InterPro" id="IPR004626">
    <property type="entry name" value="RarD"/>
</dbReference>
<dbReference type="NCBIfam" id="TIGR00688">
    <property type="entry name" value="rarD"/>
    <property type="match status" value="1"/>
</dbReference>
<dbReference type="Pfam" id="PF00892">
    <property type="entry name" value="EamA"/>
    <property type="match status" value="1"/>
</dbReference>
<dbReference type="SUPFAM" id="SSF103481">
    <property type="entry name" value="Multidrug resistance efflux transporter EmrE"/>
    <property type="match status" value="1"/>
</dbReference>
<proteinExistence type="inferred from homology"/>
<organism>
    <name type="scientific">Pasteurella multocida (strain Pm70)</name>
    <dbReference type="NCBI Taxonomy" id="272843"/>
    <lineage>
        <taxon>Bacteria</taxon>
        <taxon>Pseudomonadati</taxon>
        <taxon>Pseudomonadota</taxon>
        <taxon>Gammaproteobacteria</taxon>
        <taxon>Pasteurellales</taxon>
        <taxon>Pasteurellaceae</taxon>
        <taxon>Pasteurella</taxon>
    </lineage>
</organism>
<sequence length="291" mass="32530">MIKGILLSLSASVLFGYLYYFSTLLQPLGGEDIFGFRIIFTLPFVIAAVFLFKQKQAVGQYFVRIKQQPLLIFGFLFNSAMMGIQIWLFLWAPNNGSALSVSFGYLLLPLTMVLVGRLVFKEHISRVKFLAVVIAAIGVFSNILLKGGLSWEALLVSFGYSTYFATRKILKINDLAGFCLEMSLLLPVCIYFAWQVDLQAVQQANENILLLLVLLGLISGVALNTYIVASSLLPINVLGLLGYAEPIMMLFVSFLIGEQLDSETIPLFICLMISMILFMSEGLVRLKRRYK</sequence>
<feature type="chain" id="PRO_0000108158" description="Uncharacterized transporter PM1281">
    <location>
        <begin position="1"/>
        <end position="291"/>
    </location>
</feature>
<feature type="transmembrane region" description="Helical" evidence="1">
    <location>
        <begin position="5"/>
        <end position="23"/>
    </location>
</feature>
<feature type="transmembrane region" description="Helical" evidence="1">
    <location>
        <begin position="33"/>
        <end position="52"/>
    </location>
</feature>
<feature type="transmembrane region" description="Helical" evidence="1">
    <location>
        <begin position="69"/>
        <end position="91"/>
    </location>
</feature>
<feature type="transmembrane region" description="Helical" evidence="1">
    <location>
        <begin position="101"/>
        <end position="120"/>
    </location>
</feature>
<feature type="transmembrane region" description="Helical" evidence="1">
    <location>
        <begin position="127"/>
        <end position="144"/>
    </location>
</feature>
<feature type="transmembrane region" description="Helical" evidence="1">
    <location>
        <begin position="148"/>
        <end position="165"/>
    </location>
</feature>
<feature type="transmembrane region" description="Helical" evidence="1">
    <location>
        <begin position="172"/>
        <end position="194"/>
    </location>
</feature>
<feature type="transmembrane region" description="Helical" evidence="1">
    <location>
        <begin position="209"/>
        <end position="228"/>
    </location>
</feature>
<feature type="transmembrane region" description="Helical" evidence="1">
    <location>
        <begin position="235"/>
        <end position="257"/>
    </location>
</feature>
<feature type="transmembrane region" description="Helical" evidence="1">
    <location>
        <begin position="262"/>
        <end position="284"/>
    </location>
</feature>
<comment type="subcellular location">
    <subcellularLocation>
        <location evidence="2">Cell membrane</location>
        <topology evidence="2">Multi-pass membrane protein</topology>
    </subcellularLocation>
</comment>
<comment type="similarity">
    <text evidence="2">Belongs to the EamA transporter family.</text>
</comment>